<dbReference type="EC" id="3.1.26.4" evidence="1"/>
<dbReference type="EMBL" id="CP000886">
    <property type="protein sequence ID" value="ABX68708.1"/>
    <property type="molecule type" value="Genomic_DNA"/>
</dbReference>
<dbReference type="RefSeq" id="WP_000917872.1">
    <property type="nucleotide sequence ID" value="NC_010102.1"/>
</dbReference>
<dbReference type="SMR" id="A9MZ19"/>
<dbReference type="KEGG" id="spq:SPAB_03351"/>
<dbReference type="PATRIC" id="fig|1016998.12.peg.3164"/>
<dbReference type="HOGENOM" id="CLU_030894_6_0_6"/>
<dbReference type="BioCyc" id="SENT1016998:SPAB_RS13700-MONOMER"/>
<dbReference type="Proteomes" id="UP000008556">
    <property type="component" value="Chromosome"/>
</dbReference>
<dbReference type="GO" id="GO:0005737">
    <property type="term" value="C:cytoplasm"/>
    <property type="evidence" value="ECO:0007669"/>
    <property type="project" value="UniProtKB-SubCell"/>
</dbReference>
<dbReference type="GO" id="GO:0000287">
    <property type="term" value="F:magnesium ion binding"/>
    <property type="evidence" value="ECO:0007669"/>
    <property type="project" value="UniProtKB-UniRule"/>
</dbReference>
<dbReference type="GO" id="GO:0003676">
    <property type="term" value="F:nucleic acid binding"/>
    <property type="evidence" value="ECO:0007669"/>
    <property type="project" value="InterPro"/>
</dbReference>
<dbReference type="GO" id="GO:0004523">
    <property type="term" value="F:RNA-DNA hybrid ribonuclease activity"/>
    <property type="evidence" value="ECO:0007669"/>
    <property type="project" value="UniProtKB-UniRule"/>
</dbReference>
<dbReference type="GO" id="GO:0043137">
    <property type="term" value="P:DNA replication, removal of RNA primer"/>
    <property type="evidence" value="ECO:0007669"/>
    <property type="project" value="TreeGrafter"/>
</dbReference>
<dbReference type="CDD" id="cd09278">
    <property type="entry name" value="RNase_HI_prokaryote_like"/>
    <property type="match status" value="1"/>
</dbReference>
<dbReference type="FunFam" id="3.30.420.10:FF:000008">
    <property type="entry name" value="Ribonuclease H"/>
    <property type="match status" value="1"/>
</dbReference>
<dbReference type="Gene3D" id="3.30.420.10">
    <property type="entry name" value="Ribonuclease H-like superfamily/Ribonuclease H"/>
    <property type="match status" value="1"/>
</dbReference>
<dbReference type="HAMAP" id="MF_00042">
    <property type="entry name" value="RNase_H"/>
    <property type="match status" value="1"/>
</dbReference>
<dbReference type="InterPro" id="IPR050092">
    <property type="entry name" value="RNase_H"/>
</dbReference>
<dbReference type="InterPro" id="IPR012337">
    <property type="entry name" value="RNaseH-like_sf"/>
</dbReference>
<dbReference type="InterPro" id="IPR002156">
    <property type="entry name" value="RNaseH_domain"/>
</dbReference>
<dbReference type="InterPro" id="IPR036397">
    <property type="entry name" value="RNaseH_sf"/>
</dbReference>
<dbReference type="InterPro" id="IPR022892">
    <property type="entry name" value="RNaseHI"/>
</dbReference>
<dbReference type="NCBIfam" id="NF001236">
    <property type="entry name" value="PRK00203.1"/>
    <property type="match status" value="1"/>
</dbReference>
<dbReference type="PANTHER" id="PTHR10642">
    <property type="entry name" value="RIBONUCLEASE H1"/>
    <property type="match status" value="1"/>
</dbReference>
<dbReference type="PANTHER" id="PTHR10642:SF26">
    <property type="entry name" value="RIBONUCLEASE H1"/>
    <property type="match status" value="1"/>
</dbReference>
<dbReference type="Pfam" id="PF00075">
    <property type="entry name" value="RNase_H"/>
    <property type="match status" value="1"/>
</dbReference>
<dbReference type="SUPFAM" id="SSF53098">
    <property type="entry name" value="Ribonuclease H-like"/>
    <property type="match status" value="1"/>
</dbReference>
<dbReference type="PROSITE" id="PS50879">
    <property type="entry name" value="RNASE_H_1"/>
    <property type="match status" value="1"/>
</dbReference>
<protein>
    <recommendedName>
        <fullName evidence="1">Ribonuclease H</fullName>
        <shortName evidence="1">RNase H</shortName>
        <ecNumber evidence="1">3.1.26.4</ecNumber>
    </recommendedName>
</protein>
<evidence type="ECO:0000255" key="1">
    <source>
        <dbReference type="HAMAP-Rule" id="MF_00042"/>
    </source>
</evidence>
<evidence type="ECO:0000255" key="2">
    <source>
        <dbReference type="PROSITE-ProRule" id="PRU00408"/>
    </source>
</evidence>
<name>RNH_SALPB</name>
<keyword id="KW-0963">Cytoplasm</keyword>
<keyword id="KW-0255">Endonuclease</keyword>
<keyword id="KW-0378">Hydrolase</keyword>
<keyword id="KW-0460">Magnesium</keyword>
<keyword id="KW-0479">Metal-binding</keyword>
<keyword id="KW-0540">Nuclease</keyword>
<reference key="1">
    <citation type="submission" date="2007-11" db="EMBL/GenBank/DDBJ databases">
        <authorList>
            <consortium name="The Salmonella enterica serovar Paratyphi B Genome Sequencing Project"/>
            <person name="McClelland M."/>
            <person name="Sanderson E.K."/>
            <person name="Porwollik S."/>
            <person name="Spieth J."/>
            <person name="Clifton W.S."/>
            <person name="Fulton R."/>
            <person name="Cordes M."/>
            <person name="Wollam A."/>
            <person name="Shah N."/>
            <person name="Pepin K."/>
            <person name="Bhonagiri V."/>
            <person name="Nash W."/>
            <person name="Johnson M."/>
            <person name="Thiruvilangam P."/>
            <person name="Wilson R."/>
        </authorList>
    </citation>
    <scope>NUCLEOTIDE SEQUENCE [LARGE SCALE GENOMIC DNA]</scope>
    <source>
        <strain>ATCC BAA-1250 / SPB7</strain>
    </source>
</reference>
<proteinExistence type="inferred from homology"/>
<gene>
    <name evidence="1" type="primary">rnhA</name>
    <name type="ordered locus">SPAB_03351</name>
</gene>
<accession>A9MZ19</accession>
<comment type="function">
    <text evidence="1">Endonuclease that specifically degrades the RNA of RNA-DNA hybrids.</text>
</comment>
<comment type="catalytic activity">
    <reaction evidence="1">
        <text>Endonucleolytic cleavage to 5'-phosphomonoester.</text>
        <dbReference type="EC" id="3.1.26.4"/>
    </reaction>
</comment>
<comment type="cofactor">
    <cofactor evidence="1">
        <name>Mg(2+)</name>
        <dbReference type="ChEBI" id="CHEBI:18420"/>
    </cofactor>
    <text evidence="1">Binds 1 Mg(2+) ion per subunit. May bind a second metal ion at a regulatory site, or after substrate binding.</text>
</comment>
<comment type="subunit">
    <text evidence="1">Monomer.</text>
</comment>
<comment type="subcellular location">
    <subcellularLocation>
        <location evidence="1">Cytoplasm</location>
    </subcellularLocation>
</comment>
<comment type="similarity">
    <text evidence="1">Belongs to the RNase H family.</text>
</comment>
<feature type="chain" id="PRO_1000074663" description="Ribonuclease H">
    <location>
        <begin position="1"/>
        <end position="155"/>
    </location>
</feature>
<feature type="domain" description="RNase H type-1" evidence="2">
    <location>
        <begin position="1"/>
        <end position="142"/>
    </location>
</feature>
<feature type="binding site" evidence="1">
    <location>
        <position position="10"/>
    </location>
    <ligand>
        <name>Mg(2+)</name>
        <dbReference type="ChEBI" id="CHEBI:18420"/>
        <label>1</label>
    </ligand>
</feature>
<feature type="binding site" evidence="1">
    <location>
        <position position="10"/>
    </location>
    <ligand>
        <name>Mg(2+)</name>
        <dbReference type="ChEBI" id="CHEBI:18420"/>
        <label>2</label>
    </ligand>
</feature>
<feature type="binding site" evidence="1">
    <location>
        <position position="48"/>
    </location>
    <ligand>
        <name>Mg(2+)</name>
        <dbReference type="ChEBI" id="CHEBI:18420"/>
        <label>1</label>
    </ligand>
</feature>
<feature type="binding site" evidence="1">
    <location>
        <position position="70"/>
    </location>
    <ligand>
        <name>Mg(2+)</name>
        <dbReference type="ChEBI" id="CHEBI:18420"/>
        <label>1</label>
    </ligand>
</feature>
<feature type="binding site" evidence="1">
    <location>
        <position position="134"/>
    </location>
    <ligand>
        <name>Mg(2+)</name>
        <dbReference type="ChEBI" id="CHEBI:18420"/>
        <label>2</label>
    </ligand>
</feature>
<organism>
    <name type="scientific">Salmonella paratyphi B (strain ATCC BAA-1250 / SPB7)</name>
    <dbReference type="NCBI Taxonomy" id="1016998"/>
    <lineage>
        <taxon>Bacteria</taxon>
        <taxon>Pseudomonadati</taxon>
        <taxon>Pseudomonadota</taxon>
        <taxon>Gammaproteobacteria</taxon>
        <taxon>Enterobacterales</taxon>
        <taxon>Enterobacteriaceae</taxon>
        <taxon>Salmonella</taxon>
    </lineage>
</organism>
<sequence length="155" mass="17510">MLKQVEIFTDGSCLGNPGPGGYGAILRYRGHEKTFSEGYTLTTNNRMELMAAIVALEALKEHCEVTLSTDSQYVRQGITQWIHNWKKRGWKTAEKKPVKNVDLWKRLDAALGQHQIKWVWVKGHAGHPENERCDELARAAAMNPTQEDSGYQAEA</sequence>